<dbReference type="EMBL" id="CP000319">
    <property type="protein sequence ID" value="ABE61117.1"/>
    <property type="status" value="ALT_INIT"/>
    <property type="molecule type" value="Genomic_DNA"/>
</dbReference>
<dbReference type="RefSeq" id="WP_086008297.1">
    <property type="nucleotide sequence ID" value="NC_007964.1"/>
</dbReference>
<dbReference type="SMR" id="Q1QRN0"/>
<dbReference type="KEGG" id="nha:Nham_0217"/>
<dbReference type="eggNOG" id="COG0239">
    <property type="taxonomic scope" value="Bacteria"/>
</dbReference>
<dbReference type="HOGENOM" id="CLU_114342_2_3_5"/>
<dbReference type="OrthoDB" id="9806299at2"/>
<dbReference type="Proteomes" id="UP000001953">
    <property type="component" value="Chromosome"/>
</dbReference>
<dbReference type="GO" id="GO:0005886">
    <property type="term" value="C:plasma membrane"/>
    <property type="evidence" value="ECO:0007669"/>
    <property type="project" value="UniProtKB-SubCell"/>
</dbReference>
<dbReference type="GO" id="GO:0062054">
    <property type="term" value="F:fluoride channel activity"/>
    <property type="evidence" value="ECO:0007669"/>
    <property type="project" value="UniProtKB-UniRule"/>
</dbReference>
<dbReference type="GO" id="GO:0046872">
    <property type="term" value="F:metal ion binding"/>
    <property type="evidence" value="ECO:0007669"/>
    <property type="project" value="UniProtKB-KW"/>
</dbReference>
<dbReference type="GO" id="GO:0140114">
    <property type="term" value="P:cellular detoxification of fluoride"/>
    <property type="evidence" value="ECO:0007669"/>
    <property type="project" value="UniProtKB-UniRule"/>
</dbReference>
<dbReference type="HAMAP" id="MF_00454">
    <property type="entry name" value="FluC"/>
    <property type="match status" value="1"/>
</dbReference>
<dbReference type="InterPro" id="IPR003691">
    <property type="entry name" value="FluC"/>
</dbReference>
<dbReference type="NCBIfam" id="TIGR00494">
    <property type="entry name" value="crcB"/>
    <property type="match status" value="1"/>
</dbReference>
<dbReference type="NCBIfam" id="NF010791">
    <property type="entry name" value="PRK14195.1"/>
    <property type="match status" value="1"/>
</dbReference>
<dbReference type="NCBIfam" id="NF010794">
    <property type="entry name" value="PRK14198.1"/>
    <property type="match status" value="1"/>
</dbReference>
<dbReference type="PANTHER" id="PTHR28259">
    <property type="entry name" value="FLUORIDE EXPORT PROTEIN 1-RELATED"/>
    <property type="match status" value="1"/>
</dbReference>
<dbReference type="PANTHER" id="PTHR28259:SF1">
    <property type="entry name" value="FLUORIDE EXPORT PROTEIN 1-RELATED"/>
    <property type="match status" value="1"/>
</dbReference>
<dbReference type="Pfam" id="PF02537">
    <property type="entry name" value="CRCB"/>
    <property type="match status" value="1"/>
</dbReference>
<evidence type="ECO:0000255" key="1">
    <source>
        <dbReference type="HAMAP-Rule" id="MF_00454"/>
    </source>
</evidence>
<evidence type="ECO:0000305" key="2"/>
<comment type="function">
    <text evidence="1">Fluoride-specific ion channel. Important for reducing fluoride concentration in the cell, thus reducing its toxicity.</text>
</comment>
<comment type="catalytic activity">
    <reaction evidence="1">
        <text>fluoride(in) = fluoride(out)</text>
        <dbReference type="Rhea" id="RHEA:76159"/>
        <dbReference type="ChEBI" id="CHEBI:17051"/>
    </reaction>
    <physiologicalReaction direction="left-to-right" evidence="1">
        <dbReference type="Rhea" id="RHEA:76160"/>
    </physiologicalReaction>
</comment>
<comment type="activity regulation">
    <text evidence="1">Na(+) is not transported, but it plays an essential structural role and its presence is essential for fluoride channel function.</text>
</comment>
<comment type="subcellular location">
    <subcellularLocation>
        <location evidence="1">Cell inner membrane</location>
        <topology evidence="1">Multi-pass membrane protein</topology>
    </subcellularLocation>
</comment>
<comment type="similarity">
    <text evidence="1">Belongs to the fluoride channel Fluc/FEX (TC 1.A.43) family.</text>
</comment>
<comment type="sequence caution" evidence="2">
    <conflict type="erroneous initiation">
        <sequence resource="EMBL-CDS" id="ABE61117"/>
    </conflict>
</comment>
<gene>
    <name evidence="1" type="primary">fluC1</name>
    <name evidence="1" type="synonym">crcB1</name>
    <name type="ordered locus">Nham_0217</name>
</gene>
<reference key="1">
    <citation type="submission" date="2006-03" db="EMBL/GenBank/DDBJ databases">
        <title>Complete sequence of chromosome of Nitrobacter hamburgensis X14.</title>
        <authorList>
            <consortium name="US DOE Joint Genome Institute"/>
            <person name="Copeland A."/>
            <person name="Lucas S."/>
            <person name="Lapidus A."/>
            <person name="Barry K."/>
            <person name="Detter J.C."/>
            <person name="Glavina del Rio T."/>
            <person name="Hammon N."/>
            <person name="Israni S."/>
            <person name="Dalin E."/>
            <person name="Tice H."/>
            <person name="Pitluck S."/>
            <person name="Chain P."/>
            <person name="Malfatti S."/>
            <person name="Shin M."/>
            <person name="Vergez L."/>
            <person name="Schmutz J."/>
            <person name="Larimer F."/>
            <person name="Land M."/>
            <person name="Hauser L."/>
            <person name="Kyrpides N."/>
            <person name="Ivanova N."/>
            <person name="Ward B."/>
            <person name="Arp D."/>
            <person name="Klotz M."/>
            <person name="Stein L."/>
            <person name="O'Mullan G."/>
            <person name="Starkenburg S."/>
            <person name="Sayavedra L."/>
            <person name="Poret-Peterson A.T."/>
            <person name="Gentry M.E."/>
            <person name="Bruce D."/>
            <person name="Richardson P."/>
        </authorList>
    </citation>
    <scope>NUCLEOTIDE SEQUENCE [LARGE SCALE GENOMIC DNA]</scope>
    <source>
        <strain>DSM 10229 / NCIMB 13809 / X14</strain>
    </source>
</reference>
<sequence length="126" mass="13333">MKWTFILAVAAGGSLGSVARYLVGIGFGRLLGPKFPWGTLFINITGSLLIGLFAGLFAIRWNLPQAVRIFLIVGICGGYTTFSTFSLDSFYLIERGEVAAAGAYMIASVVLSVGALIAGIQIVRVL</sequence>
<accession>Q1QRN0</accession>
<feature type="chain" id="PRO_0000252901" description="Fluoride-specific ion channel FluC 1">
    <location>
        <begin position="1"/>
        <end position="126"/>
    </location>
</feature>
<feature type="transmembrane region" description="Helical" evidence="1">
    <location>
        <begin position="5"/>
        <end position="25"/>
    </location>
</feature>
<feature type="transmembrane region" description="Helical" evidence="1">
    <location>
        <begin position="39"/>
        <end position="59"/>
    </location>
</feature>
<feature type="transmembrane region" description="Helical" evidence="1">
    <location>
        <begin position="69"/>
        <end position="89"/>
    </location>
</feature>
<feature type="transmembrane region" description="Helical" evidence="1">
    <location>
        <begin position="100"/>
        <end position="120"/>
    </location>
</feature>
<feature type="binding site" evidence="1">
    <location>
        <position position="77"/>
    </location>
    <ligand>
        <name>Na(+)</name>
        <dbReference type="ChEBI" id="CHEBI:29101"/>
        <note>structural</note>
    </ligand>
</feature>
<feature type="binding site" evidence="1">
    <location>
        <position position="80"/>
    </location>
    <ligand>
        <name>Na(+)</name>
        <dbReference type="ChEBI" id="CHEBI:29101"/>
        <note>structural</note>
    </ligand>
</feature>
<protein>
    <recommendedName>
        <fullName evidence="1">Fluoride-specific ion channel FluC 1</fullName>
    </recommendedName>
</protein>
<keyword id="KW-0997">Cell inner membrane</keyword>
<keyword id="KW-1003">Cell membrane</keyword>
<keyword id="KW-0407">Ion channel</keyword>
<keyword id="KW-0406">Ion transport</keyword>
<keyword id="KW-0472">Membrane</keyword>
<keyword id="KW-0479">Metal-binding</keyword>
<keyword id="KW-1185">Reference proteome</keyword>
<keyword id="KW-0915">Sodium</keyword>
<keyword id="KW-0812">Transmembrane</keyword>
<keyword id="KW-1133">Transmembrane helix</keyword>
<keyword id="KW-0813">Transport</keyword>
<name>FLUC1_NITHX</name>
<organism>
    <name type="scientific">Nitrobacter hamburgensis (strain DSM 10229 / NCIMB 13809 / X14)</name>
    <dbReference type="NCBI Taxonomy" id="323097"/>
    <lineage>
        <taxon>Bacteria</taxon>
        <taxon>Pseudomonadati</taxon>
        <taxon>Pseudomonadota</taxon>
        <taxon>Alphaproteobacteria</taxon>
        <taxon>Hyphomicrobiales</taxon>
        <taxon>Nitrobacteraceae</taxon>
        <taxon>Nitrobacter</taxon>
    </lineage>
</organism>
<proteinExistence type="inferred from homology"/>